<dbReference type="EMBL" id="U18997">
    <property type="protein sequence ID" value="AAA58166.1"/>
    <property type="molecule type" value="Genomic_DNA"/>
</dbReference>
<dbReference type="EMBL" id="U00096">
    <property type="protein sequence ID" value="AAC76394.1"/>
    <property type="molecule type" value="Genomic_DNA"/>
</dbReference>
<dbReference type="EMBL" id="AP009048">
    <property type="protein sequence ID" value="BAE77921.1"/>
    <property type="molecule type" value="Genomic_DNA"/>
</dbReference>
<dbReference type="PIR" id="D65131">
    <property type="entry name" value="D65131"/>
</dbReference>
<dbReference type="RefSeq" id="NP_417828.1">
    <property type="nucleotide sequence ID" value="NC_000913.3"/>
</dbReference>
<dbReference type="RefSeq" id="WP_001031834.1">
    <property type="nucleotide sequence ID" value="NZ_STEB01000004.1"/>
</dbReference>
<dbReference type="BioGRID" id="4263103">
    <property type="interactions" value="3"/>
</dbReference>
<dbReference type="FunCoup" id="P64627">
    <property type="interactions" value="26"/>
</dbReference>
<dbReference type="STRING" id="511145.b3369"/>
<dbReference type="PaxDb" id="511145-b3369"/>
<dbReference type="EnsemblBacteria" id="AAC76394">
    <property type="protein sequence ID" value="AAC76394"/>
    <property type="gene ID" value="b3369"/>
</dbReference>
<dbReference type="GeneID" id="947879"/>
<dbReference type="KEGG" id="ecj:JW3332"/>
<dbReference type="KEGG" id="eco:b3369"/>
<dbReference type="KEGG" id="ecoc:C3026_18295"/>
<dbReference type="PATRIC" id="fig|1411691.4.peg.3360"/>
<dbReference type="EchoBASE" id="EB2744"/>
<dbReference type="eggNOG" id="ENOG5032ZRK">
    <property type="taxonomic scope" value="Bacteria"/>
</dbReference>
<dbReference type="HOGENOM" id="CLU_197401_0_0_6"/>
<dbReference type="InParanoid" id="P64627"/>
<dbReference type="OMA" id="CTGHIQN"/>
<dbReference type="OrthoDB" id="6505928at2"/>
<dbReference type="PhylomeDB" id="P64627"/>
<dbReference type="BioCyc" id="EcoCyc:G7722-MONOMER"/>
<dbReference type="PRO" id="PR:P64627"/>
<dbReference type="Proteomes" id="UP000000625">
    <property type="component" value="Chromosome"/>
</dbReference>
<dbReference type="GO" id="GO:0016020">
    <property type="term" value="C:membrane"/>
    <property type="evidence" value="ECO:0007669"/>
    <property type="project" value="UniProtKB-SubCell"/>
</dbReference>
<dbReference type="InterPro" id="IPR025318">
    <property type="entry name" value="DUF4223"/>
</dbReference>
<dbReference type="Pfam" id="PF13978">
    <property type="entry name" value="DUF4223"/>
    <property type="match status" value="1"/>
</dbReference>
<dbReference type="PROSITE" id="PS51257">
    <property type="entry name" value="PROKAR_LIPOPROTEIN"/>
    <property type="match status" value="1"/>
</dbReference>
<keyword id="KW-0472">Membrane</keyword>
<keyword id="KW-1185">Reference proteome</keyword>
<keyword id="KW-0812">Transmembrane</keyword>
<keyword id="KW-1133">Transmembrane helix</keyword>
<gene>
    <name type="primary">yhfL</name>
    <name type="ordered locus">b3369</name>
    <name type="ordered locus">JW3332</name>
</gene>
<comment type="subcellular location">
    <subcellularLocation>
        <location evidence="2">Membrane</location>
        <topology evidence="2">Single-pass membrane protein</topology>
    </subcellularLocation>
    <text evidence="3">Has been predicted to be a lipoprotein, the lipid is predicted to attach to Cys-20 (PubMed:12876315).</text>
</comment>
<reference key="1">
    <citation type="journal article" date="1997" name="Science">
        <title>The complete genome sequence of Escherichia coli K-12.</title>
        <authorList>
            <person name="Blattner F.R."/>
            <person name="Plunkett G. III"/>
            <person name="Bloch C.A."/>
            <person name="Perna N.T."/>
            <person name="Burland V."/>
            <person name="Riley M."/>
            <person name="Collado-Vides J."/>
            <person name="Glasner J.D."/>
            <person name="Rode C.K."/>
            <person name="Mayhew G.F."/>
            <person name="Gregor J."/>
            <person name="Davis N.W."/>
            <person name="Kirkpatrick H.A."/>
            <person name="Goeden M.A."/>
            <person name="Rose D.J."/>
            <person name="Mau B."/>
            <person name="Shao Y."/>
        </authorList>
    </citation>
    <scope>NUCLEOTIDE SEQUENCE [LARGE SCALE GENOMIC DNA]</scope>
    <source>
        <strain>K12 / MG1655 / ATCC 47076</strain>
    </source>
</reference>
<reference key="2">
    <citation type="journal article" date="2006" name="Mol. Syst. Biol.">
        <title>Highly accurate genome sequences of Escherichia coli K-12 strains MG1655 and W3110.</title>
        <authorList>
            <person name="Hayashi K."/>
            <person name="Morooka N."/>
            <person name="Yamamoto Y."/>
            <person name="Fujita K."/>
            <person name="Isono K."/>
            <person name="Choi S."/>
            <person name="Ohtsubo E."/>
            <person name="Baba T."/>
            <person name="Wanner B.L."/>
            <person name="Mori H."/>
            <person name="Horiuchi T."/>
        </authorList>
    </citation>
    <scope>NUCLEOTIDE SEQUENCE [LARGE SCALE GENOMIC DNA]</scope>
    <source>
        <strain>K12 / W3110 / ATCC 27325 / DSM 5911</strain>
    </source>
</reference>
<reference key="3">
    <citation type="journal article" date="2003" name="Protein Sci.">
        <title>Prediction of lipoprotein signal peptides in Gram-negative bacteria.</title>
        <authorList>
            <person name="Juncker A.S."/>
            <person name="Willenbrock H."/>
            <person name="Von Heijne G."/>
            <person name="Brunak S."/>
            <person name="Nielsen H."/>
            <person name="Krogh A."/>
        </authorList>
    </citation>
    <scope>POSSIBLE LIPOPROTEIN</scope>
</reference>
<evidence type="ECO:0000255" key="1"/>
<evidence type="ECO:0000305" key="2"/>
<evidence type="ECO:0000305" key="3">
    <source>
    </source>
</evidence>
<name>YHFL_ECOLI</name>
<sequence>MNKFIKVALVGAVLATLTACTGHIENRDKNCSYDYLLHPAISISKIIGGCGPTAQ</sequence>
<proteinExistence type="predicted"/>
<protein>
    <recommendedName>
        <fullName>Uncharacterized protein YhfL</fullName>
    </recommendedName>
</protein>
<accession>P64627</accession>
<accession>P45538</accession>
<accession>Q2M735</accession>
<organism>
    <name type="scientific">Escherichia coli (strain K12)</name>
    <dbReference type="NCBI Taxonomy" id="83333"/>
    <lineage>
        <taxon>Bacteria</taxon>
        <taxon>Pseudomonadati</taxon>
        <taxon>Pseudomonadota</taxon>
        <taxon>Gammaproteobacteria</taxon>
        <taxon>Enterobacterales</taxon>
        <taxon>Enterobacteriaceae</taxon>
        <taxon>Escherichia</taxon>
    </lineage>
</organism>
<feature type="chain" id="PRO_0000169524" description="Uncharacterized protein YhfL">
    <location>
        <begin position="1"/>
        <end position="55"/>
    </location>
</feature>
<feature type="transmembrane region" description="Helical" evidence="1">
    <location>
        <begin position="7"/>
        <end position="24"/>
    </location>
</feature>